<protein>
    <recommendedName>
        <fullName evidence="1">4-hydroxy-3-methylbut-2-en-1-yl diphosphate synthase (flavodoxin)</fullName>
        <ecNumber evidence="1">1.17.7.3</ecNumber>
    </recommendedName>
    <alternativeName>
        <fullName evidence="1">1-hydroxy-2-methyl-2-(E)-butenyl 4-diphosphate synthase</fullName>
    </alternativeName>
</protein>
<proteinExistence type="inferred from homology"/>
<reference key="1">
    <citation type="submission" date="2007-09" db="EMBL/GenBank/DDBJ databases">
        <title>Complete sequence of chromosome of Serratia proteamaculans 568.</title>
        <authorList>
            <consortium name="US DOE Joint Genome Institute"/>
            <person name="Copeland A."/>
            <person name="Lucas S."/>
            <person name="Lapidus A."/>
            <person name="Barry K."/>
            <person name="Glavina del Rio T."/>
            <person name="Dalin E."/>
            <person name="Tice H."/>
            <person name="Pitluck S."/>
            <person name="Chain P."/>
            <person name="Malfatti S."/>
            <person name="Shin M."/>
            <person name="Vergez L."/>
            <person name="Schmutz J."/>
            <person name="Larimer F."/>
            <person name="Land M."/>
            <person name="Hauser L."/>
            <person name="Kyrpides N."/>
            <person name="Kim E."/>
            <person name="Taghavi S."/>
            <person name="Newman L."/>
            <person name="Vangronsveld J."/>
            <person name="van der Lelie D."/>
            <person name="Richardson P."/>
        </authorList>
    </citation>
    <scope>NUCLEOTIDE SEQUENCE [LARGE SCALE GENOMIC DNA]</scope>
    <source>
        <strain>568</strain>
    </source>
</reference>
<sequence length="373" mass="40743">MHNQSPIIRRKSTRIYVGNVPIGDGAPIAVQSMTNTRTTDVEATVNQIKALERVGVDIVRVSVPTMDAAEAFKLIKQQVNVPLVADIHFDYRIALQVAEYGVDCLRINPGNIGNESRIRSVVDCARDKNIPIRIGVNGGSLEKDIQEKYGEPTPEALLESAMRHVDILDRLNFDQFKVSVKASDVFLAVQSYRLLAARIDQPLHLGITEAGGARSGSVKSAIGLGLLLSEGIGDTLRISLAADPVEEVKVGFDILKSLRIRARGINFIACPTCSRQEFDVIGTVNALEQRLEDIITPMDISIIGCVVNGPGEALVSTLGVTGGHKKSGFYEDGVRQKERFDNEQMIDQLEAKIRAKASMMDESNRIAVNLLEK</sequence>
<accession>A8GHW5</accession>
<keyword id="KW-0004">4Fe-4S</keyword>
<keyword id="KW-0408">Iron</keyword>
<keyword id="KW-0411">Iron-sulfur</keyword>
<keyword id="KW-0414">Isoprene biosynthesis</keyword>
<keyword id="KW-0479">Metal-binding</keyword>
<keyword id="KW-0560">Oxidoreductase</keyword>
<dbReference type="EC" id="1.17.7.3" evidence="1"/>
<dbReference type="EMBL" id="CP000826">
    <property type="protein sequence ID" value="ABV42705.1"/>
    <property type="molecule type" value="Genomic_DNA"/>
</dbReference>
<dbReference type="SMR" id="A8GHW5"/>
<dbReference type="STRING" id="399741.Spro_3609"/>
<dbReference type="KEGG" id="spe:Spro_3609"/>
<dbReference type="eggNOG" id="COG0821">
    <property type="taxonomic scope" value="Bacteria"/>
</dbReference>
<dbReference type="HOGENOM" id="CLU_042258_0_0_6"/>
<dbReference type="OrthoDB" id="9803214at2"/>
<dbReference type="UniPathway" id="UPA00056">
    <property type="reaction ID" value="UER00096"/>
</dbReference>
<dbReference type="GO" id="GO:0051539">
    <property type="term" value="F:4 iron, 4 sulfur cluster binding"/>
    <property type="evidence" value="ECO:0007669"/>
    <property type="project" value="UniProtKB-UniRule"/>
</dbReference>
<dbReference type="GO" id="GO:0046429">
    <property type="term" value="F:4-hydroxy-3-methylbut-2-en-1-yl diphosphate synthase activity (ferredoxin)"/>
    <property type="evidence" value="ECO:0007669"/>
    <property type="project" value="UniProtKB-UniRule"/>
</dbReference>
<dbReference type="GO" id="GO:0141197">
    <property type="term" value="F:4-hydroxy-3-methylbut-2-enyl-diphosphate synthase activity (flavodoxin)"/>
    <property type="evidence" value="ECO:0007669"/>
    <property type="project" value="UniProtKB-EC"/>
</dbReference>
<dbReference type="GO" id="GO:0005506">
    <property type="term" value="F:iron ion binding"/>
    <property type="evidence" value="ECO:0007669"/>
    <property type="project" value="InterPro"/>
</dbReference>
<dbReference type="GO" id="GO:0019288">
    <property type="term" value="P:isopentenyl diphosphate biosynthetic process, methylerythritol 4-phosphate pathway"/>
    <property type="evidence" value="ECO:0007669"/>
    <property type="project" value="UniProtKB-UniRule"/>
</dbReference>
<dbReference type="GO" id="GO:0016114">
    <property type="term" value="P:terpenoid biosynthetic process"/>
    <property type="evidence" value="ECO:0007669"/>
    <property type="project" value="InterPro"/>
</dbReference>
<dbReference type="FunFam" id="3.20.20.20:FF:000001">
    <property type="entry name" value="4-hydroxy-3-methylbut-2-en-1-yl diphosphate synthase (flavodoxin)"/>
    <property type="match status" value="1"/>
</dbReference>
<dbReference type="FunFam" id="3.30.413.10:FF:000002">
    <property type="entry name" value="4-hydroxy-3-methylbut-2-en-1-yl diphosphate synthase (flavodoxin)"/>
    <property type="match status" value="1"/>
</dbReference>
<dbReference type="Gene3D" id="3.20.20.20">
    <property type="entry name" value="Dihydropteroate synthase-like"/>
    <property type="match status" value="1"/>
</dbReference>
<dbReference type="Gene3D" id="3.30.413.10">
    <property type="entry name" value="Sulfite Reductase Hemoprotein, domain 1"/>
    <property type="match status" value="1"/>
</dbReference>
<dbReference type="HAMAP" id="MF_00159">
    <property type="entry name" value="IspG"/>
    <property type="match status" value="1"/>
</dbReference>
<dbReference type="InterPro" id="IPR011005">
    <property type="entry name" value="Dihydropteroate_synth-like_sf"/>
</dbReference>
<dbReference type="InterPro" id="IPR036849">
    <property type="entry name" value="Enolase-like_C_sf"/>
</dbReference>
<dbReference type="InterPro" id="IPR016425">
    <property type="entry name" value="IspG_bac"/>
</dbReference>
<dbReference type="InterPro" id="IPR004588">
    <property type="entry name" value="IspG_bac-typ"/>
</dbReference>
<dbReference type="InterPro" id="IPR045854">
    <property type="entry name" value="NO2/SO3_Rdtase_4Fe4S_sf"/>
</dbReference>
<dbReference type="NCBIfam" id="TIGR00612">
    <property type="entry name" value="ispG_gcpE"/>
    <property type="match status" value="1"/>
</dbReference>
<dbReference type="NCBIfam" id="NF001540">
    <property type="entry name" value="PRK00366.1"/>
    <property type="match status" value="1"/>
</dbReference>
<dbReference type="PANTHER" id="PTHR30454">
    <property type="entry name" value="4-HYDROXY-3-METHYLBUT-2-EN-1-YL DIPHOSPHATE SYNTHASE"/>
    <property type="match status" value="1"/>
</dbReference>
<dbReference type="PANTHER" id="PTHR30454:SF0">
    <property type="entry name" value="4-HYDROXY-3-METHYLBUT-2-EN-1-YL DIPHOSPHATE SYNTHASE (FERREDOXIN), CHLOROPLASTIC"/>
    <property type="match status" value="1"/>
</dbReference>
<dbReference type="Pfam" id="PF04551">
    <property type="entry name" value="GcpE"/>
    <property type="match status" value="1"/>
</dbReference>
<dbReference type="PIRSF" id="PIRSF004640">
    <property type="entry name" value="IspG"/>
    <property type="match status" value="1"/>
</dbReference>
<dbReference type="SUPFAM" id="SSF51604">
    <property type="entry name" value="Enolase C-terminal domain-like"/>
    <property type="match status" value="1"/>
</dbReference>
<dbReference type="SUPFAM" id="SSF56014">
    <property type="entry name" value="Nitrite and sulphite reductase 4Fe-4S domain-like"/>
    <property type="match status" value="1"/>
</dbReference>
<name>ISPG_SERP5</name>
<organism>
    <name type="scientific">Serratia proteamaculans (strain 568)</name>
    <dbReference type="NCBI Taxonomy" id="399741"/>
    <lineage>
        <taxon>Bacteria</taxon>
        <taxon>Pseudomonadati</taxon>
        <taxon>Pseudomonadota</taxon>
        <taxon>Gammaproteobacteria</taxon>
        <taxon>Enterobacterales</taxon>
        <taxon>Yersiniaceae</taxon>
        <taxon>Serratia</taxon>
    </lineage>
</organism>
<feature type="chain" id="PRO_1000058197" description="4-hydroxy-3-methylbut-2-en-1-yl diphosphate synthase (flavodoxin)">
    <location>
        <begin position="1"/>
        <end position="373"/>
    </location>
</feature>
<feature type="binding site" evidence="1">
    <location>
        <position position="270"/>
    </location>
    <ligand>
        <name>[4Fe-4S] cluster</name>
        <dbReference type="ChEBI" id="CHEBI:49883"/>
    </ligand>
</feature>
<feature type="binding site" evidence="1">
    <location>
        <position position="273"/>
    </location>
    <ligand>
        <name>[4Fe-4S] cluster</name>
        <dbReference type="ChEBI" id="CHEBI:49883"/>
    </ligand>
</feature>
<feature type="binding site" evidence="1">
    <location>
        <position position="305"/>
    </location>
    <ligand>
        <name>[4Fe-4S] cluster</name>
        <dbReference type="ChEBI" id="CHEBI:49883"/>
    </ligand>
</feature>
<feature type="binding site" evidence="1">
    <location>
        <position position="312"/>
    </location>
    <ligand>
        <name>[4Fe-4S] cluster</name>
        <dbReference type="ChEBI" id="CHEBI:49883"/>
    </ligand>
</feature>
<gene>
    <name evidence="1" type="primary">ispG</name>
    <name type="ordered locus">Spro_3609</name>
</gene>
<comment type="function">
    <text evidence="1">Converts 2C-methyl-D-erythritol 2,4-cyclodiphosphate (ME-2,4cPP) into 1-hydroxy-2-methyl-2-(E)-butenyl 4-diphosphate.</text>
</comment>
<comment type="catalytic activity">
    <reaction evidence="1">
        <text>(2E)-4-hydroxy-3-methylbut-2-enyl diphosphate + oxidized [flavodoxin] + H2O + 2 H(+) = 2-C-methyl-D-erythritol 2,4-cyclic diphosphate + reduced [flavodoxin]</text>
        <dbReference type="Rhea" id="RHEA:43604"/>
        <dbReference type="Rhea" id="RHEA-COMP:10622"/>
        <dbReference type="Rhea" id="RHEA-COMP:10623"/>
        <dbReference type="ChEBI" id="CHEBI:15377"/>
        <dbReference type="ChEBI" id="CHEBI:15378"/>
        <dbReference type="ChEBI" id="CHEBI:57618"/>
        <dbReference type="ChEBI" id="CHEBI:58210"/>
        <dbReference type="ChEBI" id="CHEBI:58483"/>
        <dbReference type="ChEBI" id="CHEBI:128753"/>
        <dbReference type="EC" id="1.17.7.3"/>
    </reaction>
</comment>
<comment type="cofactor">
    <cofactor evidence="1">
        <name>[4Fe-4S] cluster</name>
        <dbReference type="ChEBI" id="CHEBI:49883"/>
    </cofactor>
    <text evidence="1">Binds 1 [4Fe-4S] cluster.</text>
</comment>
<comment type="pathway">
    <text evidence="1">Isoprenoid biosynthesis; isopentenyl diphosphate biosynthesis via DXP pathway; isopentenyl diphosphate from 1-deoxy-D-xylulose 5-phosphate: step 5/6.</text>
</comment>
<comment type="similarity">
    <text evidence="1">Belongs to the IspG family.</text>
</comment>
<evidence type="ECO:0000255" key="1">
    <source>
        <dbReference type="HAMAP-Rule" id="MF_00159"/>
    </source>
</evidence>